<reference key="1">
    <citation type="journal article" date="2003" name="Nature">
        <title>The genome sequence of Bacillus anthracis Ames and comparison to closely related bacteria.</title>
        <authorList>
            <person name="Read T.D."/>
            <person name="Peterson S.N."/>
            <person name="Tourasse N.J."/>
            <person name="Baillie L.W."/>
            <person name="Paulsen I.T."/>
            <person name="Nelson K.E."/>
            <person name="Tettelin H."/>
            <person name="Fouts D.E."/>
            <person name="Eisen J.A."/>
            <person name="Gill S.R."/>
            <person name="Holtzapple E.K."/>
            <person name="Okstad O.A."/>
            <person name="Helgason E."/>
            <person name="Rilstone J."/>
            <person name="Wu M."/>
            <person name="Kolonay J.F."/>
            <person name="Beanan M.J."/>
            <person name="Dodson R.J."/>
            <person name="Brinkac L.M."/>
            <person name="Gwinn M.L."/>
            <person name="DeBoy R.T."/>
            <person name="Madpu R."/>
            <person name="Daugherty S.C."/>
            <person name="Durkin A.S."/>
            <person name="Haft D.H."/>
            <person name="Nelson W.C."/>
            <person name="Peterson J.D."/>
            <person name="Pop M."/>
            <person name="Khouri H.M."/>
            <person name="Radune D."/>
            <person name="Benton J.L."/>
            <person name="Mahamoud Y."/>
            <person name="Jiang L."/>
            <person name="Hance I.R."/>
            <person name="Weidman J.F."/>
            <person name="Berry K.J."/>
            <person name="Plaut R.D."/>
            <person name="Wolf A.M."/>
            <person name="Watkins K.L."/>
            <person name="Nierman W.C."/>
            <person name="Hazen A."/>
            <person name="Cline R.T."/>
            <person name="Redmond C."/>
            <person name="Thwaite J.E."/>
            <person name="White O."/>
            <person name="Salzberg S.L."/>
            <person name="Thomason B."/>
            <person name="Friedlander A.M."/>
            <person name="Koehler T.M."/>
            <person name="Hanna P.C."/>
            <person name="Kolstoe A.-B."/>
            <person name="Fraser C.M."/>
        </authorList>
    </citation>
    <scope>NUCLEOTIDE SEQUENCE [LARGE SCALE GENOMIC DNA]</scope>
    <source>
        <strain>Ames / isolate Porton</strain>
    </source>
</reference>
<reference key="2">
    <citation type="journal article" date="2009" name="J. Bacteriol.">
        <title>The complete genome sequence of Bacillus anthracis Ames 'Ancestor'.</title>
        <authorList>
            <person name="Ravel J."/>
            <person name="Jiang L."/>
            <person name="Stanley S.T."/>
            <person name="Wilson M.R."/>
            <person name="Decker R.S."/>
            <person name="Read T.D."/>
            <person name="Worsham P."/>
            <person name="Keim P.S."/>
            <person name="Salzberg S.L."/>
            <person name="Fraser-Liggett C.M."/>
            <person name="Rasko D.A."/>
        </authorList>
    </citation>
    <scope>NUCLEOTIDE SEQUENCE [LARGE SCALE GENOMIC DNA]</scope>
    <source>
        <strain>Ames ancestor</strain>
    </source>
</reference>
<reference key="3">
    <citation type="submission" date="2004-01" db="EMBL/GenBank/DDBJ databases">
        <title>Complete genome sequence of Bacillus anthracis Sterne.</title>
        <authorList>
            <person name="Brettin T.S."/>
            <person name="Bruce D."/>
            <person name="Challacombe J.F."/>
            <person name="Gilna P."/>
            <person name="Han C."/>
            <person name="Hill K."/>
            <person name="Hitchcock P."/>
            <person name="Jackson P."/>
            <person name="Keim P."/>
            <person name="Longmire J."/>
            <person name="Lucas S."/>
            <person name="Okinaka R."/>
            <person name="Richardson P."/>
            <person name="Rubin E."/>
            <person name="Tice H."/>
        </authorList>
    </citation>
    <scope>NUCLEOTIDE SEQUENCE [LARGE SCALE GENOMIC DNA]</scope>
    <source>
        <strain>Sterne</strain>
    </source>
</reference>
<protein>
    <recommendedName>
        <fullName evidence="1">GMP reductase</fullName>
        <ecNumber evidence="1">1.7.1.7</ecNumber>
    </recommendedName>
    <alternativeName>
        <fullName evidence="1">Guanosine 5'-monophosphate oxidoreductase</fullName>
        <shortName evidence="1">Guanosine monophosphate reductase</shortName>
    </alternativeName>
</protein>
<name>GUAC_BACAN</name>
<sequence>MGNVFDYEDIQLIPAKCIVNSRSECDTTVTLGKHKFKLPVVPANMQTIIDERIATYLAENNYFYIMHRFQPEKRISFIRDMQSRGLIASISVGVKEDEYEFVQQLAAEHLTPEYITIDIAHGHSNAVINMIQHIKKHLPESFVIAGNVGTPEAVRELENAGADATKVGIGPGKVCITKIKTGFGTGGWQLAALRWCAKAASKPIIADGGIRTNGDVAKSIRFGATMVMIGSLFAGHEESPGETIEKDGKLYKEYFGSASEFQKGEKKNVEGKKMFVEHKGSLEDTLIEMEQDLQSSISYAGGTKLDSIRTVDYVVVKNSIFNGDKVY</sequence>
<evidence type="ECO:0000255" key="1">
    <source>
        <dbReference type="HAMAP-Rule" id="MF_01511"/>
    </source>
</evidence>
<evidence type="ECO:0007829" key="2">
    <source>
        <dbReference type="PDB" id="1YPF"/>
    </source>
</evidence>
<accession>Q81JJ9</accession>
<accession>Q6HQ42</accession>
<accession>Q6KJI6</accession>
<feature type="chain" id="PRO_0000093746" description="GMP reductase">
    <location>
        <begin position="1"/>
        <end position="327"/>
    </location>
</feature>
<feature type="active site" description="Thioimidate intermediate" evidence="1">
    <location>
        <position position="175"/>
    </location>
</feature>
<feature type="binding site" evidence="1">
    <location>
        <begin position="204"/>
        <end position="227"/>
    </location>
    <ligand>
        <name>NADP(+)</name>
        <dbReference type="ChEBI" id="CHEBI:58349"/>
    </ligand>
</feature>
<feature type="helix" evidence="2">
    <location>
        <begin position="7"/>
        <end position="9"/>
    </location>
</feature>
<feature type="strand" evidence="2">
    <location>
        <begin position="10"/>
        <end position="12"/>
    </location>
</feature>
<feature type="helix" evidence="2">
    <location>
        <begin position="22"/>
        <end position="24"/>
    </location>
</feature>
<feature type="strand" evidence="2">
    <location>
        <begin position="29"/>
        <end position="31"/>
    </location>
</feature>
<feature type="strand" evidence="2">
    <location>
        <begin position="34"/>
        <end position="42"/>
    </location>
</feature>
<feature type="turn" evidence="2">
    <location>
        <begin position="46"/>
        <end position="48"/>
    </location>
</feature>
<feature type="helix" evidence="2">
    <location>
        <begin position="51"/>
        <end position="59"/>
    </location>
</feature>
<feature type="helix" evidence="2">
    <location>
        <begin position="71"/>
        <end position="73"/>
    </location>
</feature>
<feature type="helix" evidence="2">
    <location>
        <begin position="74"/>
        <end position="83"/>
    </location>
</feature>
<feature type="strand" evidence="2">
    <location>
        <begin position="89"/>
        <end position="92"/>
    </location>
</feature>
<feature type="helix" evidence="2">
    <location>
        <begin position="96"/>
        <end position="107"/>
    </location>
</feature>
<feature type="strand" evidence="2">
    <location>
        <begin position="113"/>
        <end position="118"/>
    </location>
</feature>
<feature type="helix" evidence="2">
    <location>
        <begin position="125"/>
        <end position="137"/>
    </location>
</feature>
<feature type="strand" evidence="2">
    <location>
        <begin position="141"/>
        <end position="148"/>
    </location>
</feature>
<feature type="helix" evidence="2">
    <location>
        <begin position="151"/>
        <end position="160"/>
    </location>
</feature>
<feature type="strand" evidence="2">
    <location>
        <begin position="163"/>
        <end position="167"/>
    </location>
</feature>
<feature type="helix" evidence="2">
    <location>
        <begin position="176"/>
        <end position="181"/>
    </location>
</feature>
<feature type="helix" evidence="2">
    <location>
        <begin position="189"/>
        <end position="198"/>
    </location>
</feature>
<feature type="strand" evidence="2">
    <location>
        <begin position="204"/>
        <end position="208"/>
    </location>
</feature>
<feature type="helix" evidence="2">
    <location>
        <begin position="214"/>
        <end position="221"/>
    </location>
</feature>
<feature type="strand" evidence="2">
    <location>
        <begin position="225"/>
        <end position="230"/>
    </location>
</feature>
<feature type="helix" evidence="2">
    <location>
        <begin position="231"/>
        <end position="233"/>
    </location>
</feature>
<feature type="strand" evidence="2">
    <location>
        <begin position="239"/>
        <end position="241"/>
    </location>
</feature>
<feature type="strand" evidence="2">
    <location>
        <begin position="273"/>
        <end position="277"/>
    </location>
</feature>
<feature type="helix" evidence="2">
    <location>
        <begin position="282"/>
        <end position="299"/>
    </location>
</feature>
<feature type="strand" evidence="2">
    <location>
        <begin position="302"/>
        <end position="304"/>
    </location>
</feature>
<feature type="helix" evidence="2">
    <location>
        <begin position="305"/>
        <end position="310"/>
    </location>
</feature>
<feature type="strand" evidence="2">
    <location>
        <begin position="313"/>
        <end position="315"/>
    </location>
</feature>
<keyword id="KW-0002">3D-structure</keyword>
<keyword id="KW-0521">NADP</keyword>
<keyword id="KW-0560">Oxidoreductase</keyword>
<keyword id="KW-1185">Reference proteome</keyword>
<dbReference type="EC" id="1.7.1.7" evidence="1"/>
<dbReference type="EMBL" id="AE016879">
    <property type="protein sequence ID" value="AAP29337.1"/>
    <property type="molecule type" value="Genomic_DNA"/>
</dbReference>
<dbReference type="EMBL" id="AE017334">
    <property type="protein sequence ID" value="AAT34865.1"/>
    <property type="molecule type" value="Genomic_DNA"/>
</dbReference>
<dbReference type="EMBL" id="AE017225">
    <property type="protein sequence ID" value="AAT57596.1"/>
    <property type="molecule type" value="Genomic_DNA"/>
</dbReference>
<dbReference type="RefSeq" id="NP_847851.1">
    <property type="nucleotide sequence ID" value="NC_003997.3"/>
</dbReference>
<dbReference type="RefSeq" id="WP_000528705.1">
    <property type="nucleotide sequence ID" value="NZ_WXXJ01000017.1"/>
</dbReference>
<dbReference type="RefSeq" id="YP_031546.1">
    <property type="nucleotide sequence ID" value="NC_005945.1"/>
</dbReference>
<dbReference type="PDB" id="1YPF">
    <property type="method" value="X-ray"/>
    <property type="resolution" value="1.80 A"/>
    <property type="chains" value="A/B=1-327"/>
</dbReference>
<dbReference type="PDB" id="2A1Y">
    <property type="method" value="X-ray"/>
    <property type="resolution" value="2.27 A"/>
    <property type="chains" value="A=1-327"/>
</dbReference>
<dbReference type="PDBsum" id="1YPF"/>
<dbReference type="PDBsum" id="2A1Y"/>
<dbReference type="SMR" id="Q81JJ9"/>
<dbReference type="STRING" id="261594.GBAA_5705"/>
<dbReference type="DNASU" id="1085456"/>
<dbReference type="GeneID" id="45025280"/>
<dbReference type="KEGG" id="ban:BA_5705"/>
<dbReference type="KEGG" id="bar:GBAA_5705"/>
<dbReference type="KEGG" id="bat:BAS5309"/>
<dbReference type="PATRIC" id="fig|198094.11.peg.5667"/>
<dbReference type="eggNOG" id="COG0516">
    <property type="taxonomic scope" value="Bacteria"/>
</dbReference>
<dbReference type="HOGENOM" id="CLU_022552_5_0_9"/>
<dbReference type="OMA" id="AYKEYFG"/>
<dbReference type="OrthoDB" id="9805398at2"/>
<dbReference type="EvolutionaryTrace" id="Q81JJ9"/>
<dbReference type="Proteomes" id="UP000000427">
    <property type="component" value="Chromosome"/>
</dbReference>
<dbReference type="Proteomes" id="UP000000594">
    <property type="component" value="Chromosome"/>
</dbReference>
<dbReference type="GO" id="GO:0005829">
    <property type="term" value="C:cytosol"/>
    <property type="evidence" value="ECO:0007669"/>
    <property type="project" value="TreeGrafter"/>
</dbReference>
<dbReference type="GO" id="GO:1902560">
    <property type="term" value="C:GMP reductase complex"/>
    <property type="evidence" value="ECO:0007669"/>
    <property type="project" value="InterPro"/>
</dbReference>
<dbReference type="GO" id="GO:0003920">
    <property type="term" value="F:GMP reductase activity"/>
    <property type="evidence" value="ECO:0007669"/>
    <property type="project" value="UniProtKB-UniRule"/>
</dbReference>
<dbReference type="GO" id="GO:0016627">
    <property type="term" value="F:oxidoreductase activity, acting on the CH-CH group of donors"/>
    <property type="evidence" value="ECO:0007669"/>
    <property type="project" value="InterPro"/>
</dbReference>
<dbReference type="GO" id="GO:0006207">
    <property type="term" value="P:'de novo' pyrimidine nucleobase biosynthetic process"/>
    <property type="evidence" value="ECO:0007669"/>
    <property type="project" value="InterPro"/>
</dbReference>
<dbReference type="GO" id="GO:0006163">
    <property type="term" value="P:purine nucleotide metabolic process"/>
    <property type="evidence" value="ECO:0007669"/>
    <property type="project" value="UniProtKB-UniRule"/>
</dbReference>
<dbReference type="CDD" id="cd00381">
    <property type="entry name" value="IMPDH"/>
    <property type="match status" value="1"/>
</dbReference>
<dbReference type="FunFam" id="3.20.20.70:FF:000079">
    <property type="entry name" value="GMP reductase"/>
    <property type="match status" value="1"/>
</dbReference>
<dbReference type="Gene3D" id="3.20.20.70">
    <property type="entry name" value="Aldolase class I"/>
    <property type="match status" value="1"/>
</dbReference>
<dbReference type="HAMAP" id="MF_01511">
    <property type="entry name" value="GMP_reduct_type2"/>
    <property type="match status" value="1"/>
</dbReference>
<dbReference type="InterPro" id="IPR013785">
    <property type="entry name" value="Aldolase_TIM"/>
</dbReference>
<dbReference type="InterPro" id="IPR001295">
    <property type="entry name" value="Dihydroorotate_DH_CS"/>
</dbReference>
<dbReference type="InterPro" id="IPR050139">
    <property type="entry name" value="GMP_reductase"/>
</dbReference>
<dbReference type="InterPro" id="IPR005994">
    <property type="entry name" value="GuaC_type_2"/>
</dbReference>
<dbReference type="InterPro" id="IPR015875">
    <property type="entry name" value="IMP_DH/GMP_Rdtase_CS"/>
</dbReference>
<dbReference type="InterPro" id="IPR001093">
    <property type="entry name" value="IMP_DH_GMPRt"/>
</dbReference>
<dbReference type="NCBIfam" id="TIGR01306">
    <property type="entry name" value="GMP_reduct_2"/>
    <property type="match status" value="1"/>
</dbReference>
<dbReference type="NCBIfam" id="NF003966">
    <property type="entry name" value="PRK05458.1"/>
    <property type="match status" value="1"/>
</dbReference>
<dbReference type="PANTHER" id="PTHR43170">
    <property type="entry name" value="GMP REDUCTASE"/>
    <property type="match status" value="1"/>
</dbReference>
<dbReference type="PANTHER" id="PTHR43170:SF5">
    <property type="entry name" value="GMP REDUCTASE"/>
    <property type="match status" value="1"/>
</dbReference>
<dbReference type="Pfam" id="PF00478">
    <property type="entry name" value="IMPDH"/>
    <property type="match status" value="1"/>
</dbReference>
<dbReference type="PIRSF" id="PIRSF036500">
    <property type="entry name" value="GMP_red_Firmic"/>
    <property type="match status" value="1"/>
</dbReference>
<dbReference type="SMART" id="SM01240">
    <property type="entry name" value="IMPDH"/>
    <property type="match status" value="1"/>
</dbReference>
<dbReference type="SUPFAM" id="SSF51412">
    <property type="entry name" value="Inosine monophosphate dehydrogenase (IMPDH)"/>
    <property type="match status" value="1"/>
</dbReference>
<dbReference type="PROSITE" id="PS00487">
    <property type="entry name" value="IMP_DH_GMP_RED"/>
    <property type="match status" value="1"/>
</dbReference>
<gene>
    <name evidence="1" type="primary">guaC</name>
    <name type="ordered locus">BA_5705</name>
    <name type="ordered locus">GBAA_5705</name>
    <name type="ordered locus">BAS5309</name>
</gene>
<proteinExistence type="evidence at protein level"/>
<organism>
    <name type="scientific">Bacillus anthracis</name>
    <dbReference type="NCBI Taxonomy" id="1392"/>
    <lineage>
        <taxon>Bacteria</taxon>
        <taxon>Bacillati</taxon>
        <taxon>Bacillota</taxon>
        <taxon>Bacilli</taxon>
        <taxon>Bacillales</taxon>
        <taxon>Bacillaceae</taxon>
        <taxon>Bacillus</taxon>
        <taxon>Bacillus cereus group</taxon>
    </lineage>
</organism>
<comment type="function">
    <text evidence="1">Catalyzes the irreversible NADPH-dependent deamination of GMP to IMP. It functions in the conversion of nucleobase, nucleoside and nucleotide derivatives of G to A nucleotides, and in maintaining the intracellular balance of A and G nucleotides.</text>
</comment>
<comment type="catalytic activity">
    <reaction evidence="1">
        <text>IMP + NH4(+) + NADP(+) = GMP + NADPH + 2 H(+)</text>
        <dbReference type="Rhea" id="RHEA:17185"/>
        <dbReference type="ChEBI" id="CHEBI:15378"/>
        <dbReference type="ChEBI" id="CHEBI:28938"/>
        <dbReference type="ChEBI" id="CHEBI:57783"/>
        <dbReference type="ChEBI" id="CHEBI:58053"/>
        <dbReference type="ChEBI" id="CHEBI:58115"/>
        <dbReference type="ChEBI" id="CHEBI:58349"/>
        <dbReference type="EC" id="1.7.1.7"/>
    </reaction>
</comment>
<comment type="similarity">
    <text evidence="1">Belongs to the IMPDH/GMPR family. GuaC type 2 subfamily.</text>
</comment>